<protein>
    <recommendedName>
        <fullName evidence="1">Siroheme synthase</fullName>
    </recommendedName>
    <domain>
        <recommendedName>
            <fullName evidence="1">Uroporphyrinogen-III C-methyltransferase</fullName>
            <shortName evidence="1">Urogen III methylase</shortName>
            <ecNumber evidence="1">2.1.1.107</ecNumber>
        </recommendedName>
        <alternativeName>
            <fullName evidence="1">SUMT</fullName>
        </alternativeName>
        <alternativeName>
            <fullName evidence="1">Uroporphyrinogen III methylase</fullName>
            <shortName evidence="1">UROM</shortName>
        </alternativeName>
    </domain>
    <domain>
        <recommendedName>
            <fullName evidence="1">Precorrin-2 dehydrogenase</fullName>
            <ecNumber evidence="1">1.3.1.76</ecNumber>
        </recommendedName>
    </domain>
    <domain>
        <recommendedName>
            <fullName evidence="1">Sirohydrochlorin ferrochelatase</fullName>
            <ecNumber evidence="1">4.99.1.4</ecNumber>
        </recommendedName>
    </domain>
</protein>
<organism>
    <name type="scientific">Gluconacetobacter diazotrophicus (strain ATCC 49037 / DSM 5601 / CCUG 37298 / CIP 103539 / LMG 7603 / PAl5)</name>
    <dbReference type="NCBI Taxonomy" id="272568"/>
    <lineage>
        <taxon>Bacteria</taxon>
        <taxon>Pseudomonadati</taxon>
        <taxon>Pseudomonadota</taxon>
        <taxon>Alphaproteobacteria</taxon>
        <taxon>Acetobacterales</taxon>
        <taxon>Acetobacteraceae</taxon>
        <taxon>Gluconacetobacter</taxon>
    </lineage>
</organism>
<gene>
    <name evidence="1" type="primary">cysG</name>
    <name type="ordered locus">GDI0165</name>
    <name type="ordered locus">Gdia_2235</name>
</gene>
<comment type="function">
    <text evidence="1">Multifunctional enzyme that catalyzes the SAM-dependent methylations of uroporphyrinogen III at position C-2 and C-7 to form precorrin-2 via precorrin-1. Then it catalyzes the NAD-dependent ring dehydrogenation of precorrin-2 to yield sirohydrochlorin. Finally, it catalyzes the ferrochelation of sirohydrochlorin to yield siroheme.</text>
</comment>
<comment type="catalytic activity">
    <reaction evidence="1">
        <text>uroporphyrinogen III + 2 S-adenosyl-L-methionine = precorrin-2 + 2 S-adenosyl-L-homocysteine + H(+)</text>
        <dbReference type="Rhea" id="RHEA:32459"/>
        <dbReference type="ChEBI" id="CHEBI:15378"/>
        <dbReference type="ChEBI" id="CHEBI:57308"/>
        <dbReference type="ChEBI" id="CHEBI:57856"/>
        <dbReference type="ChEBI" id="CHEBI:58827"/>
        <dbReference type="ChEBI" id="CHEBI:59789"/>
        <dbReference type="EC" id="2.1.1.107"/>
    </reaction>
</comment>
<comment type="catalytic activity">
    <reaction evidence="1">
        <text>precorrin-2 + NAD(+) = sirohydrochlorin + NADH + 2 H(+)</text>
        <dbReference type="Rhea" id="RHEA:15613"/>
        <dbReference type="ChEBI" id="CHEBI:15378"/>
        <dbReference type="ChEBI" id="CHEBI:57540"/>
        <dbReference type="ChEBI" id="CHEBI:57945"/>
        <dbReference type="ChEBI" id="CHEBI:58351"/>
        <dbReference type="ChEBI" id="CHEBI:58827"/>
        <dbReference type="EC" id="1.3.1.76"/>
    </reaction>
</comment>
<comment type="catalytic activity">
    <reaction evidence="1">
        <text>siroheme + 2 H(+) = sirohydrochlorin + Fe(2+)</text>
        <dbReference type="Rhea" id="RHEA:24360"/>
        <dbReference type="ChEBI" id="CHEBI:15378"/>
        <dbReference type="ChEBI" id="CHEBI:29033"/>
        <dbReference type="ChEBI" id="CHEBI:58351"/>
        <dbReference type="ChEBI" id="CHEBI:60052"/>
        <dbReference type="EC" id="4.99.1.4"/>
    </reaction>
</comment>
<comment type="pathway">
    <text evidence="1">Cofactor biosynthesis; adenosylcobalamin biosynthesis; precorrin-2 from uroporphyrinogen III: step 1/1.</text>
</comment>
<comment type="pathway">
    <text evidence="1">Cofactor biosynthesis; adenosylcobalamin biosynthesis; sirohydrochlorin from precorrin-2: step 1/1.</text>
</comment>
<comment type="pathway">
    <text evidence="1">Porphyrin-containing compound metabolism; siroheme biosynthesis; precorrin-2 from uroporphyrinogen III: step 1/1.</text>
</comment>
<comment type="pathway">
    <text evidence="1">Porphyrin-containing compound metabolism; siroheme biosynthesis; siroheme from sirohydrochlorin: step 1/1.</text>
</comment>
<comment type="pathway">
    <text evidence="1">Porphyrin-containing compound metabolism; siroheme biosynthesis; sirohydrochlorin from precorrin-2: step 1/1.</text>
</comment>
<comment type="similarity">
    <text evidence="1">In the N-terminal section; belongs to the precorrin-2 dehydrogenase / sirohydrochlorin ferrochelatase family.</text>
</comment>
<comment type="similarity">
    <text evidence="1">In the C-terminal section; belongs to the precorrin methyltransferase family.</text>
</comment>
<proteinExistence type="inferred from homology"/>
<evidence type="ECO:0000255" key="1">
    <source>
        <dbReference type="HAMAP-Rule" id="MF_01646"/>
    </source>
</evidence>
<reference key="1">
    <citation type="journal article" date="2009" name="BMC Genomics">
        <title>Complete genome sequence of the sugarcane nitrogen-fixing endophyte Gluconacetobacter diazotrophicus Pal5.</title>
        <authorList>
            <person name="Bertalan M."/>
            <person name="Albano R."/>
            <person name="de Padua V."/>
            <person name="Rouws L."/>
            <person name="Rojas C."/>
            <person name="Hemerly A."/>
            <person name="Teixeira K."/>
            <person name="Schwab S."/>
            <person name="Araujo J."/>
            <person name="Oliveira A."/>
            <person name="Franca L."/>
            <person name="Magalhaes V."/>
            <person name="Alqueres S."/>
            <person name="Cardoso A."/>
            <person name="Almeida W."/>
            <person name="Loureiro M.M."/>
            <person name="Nogueira E."/>
            <person name="Cidade D."/>
            <person name="Oliveira D."/>
            <person name="Simao T."/>
            <person name="Macedo J."/>
            <person name="Valadao A."/>
            <person name="Dreschsel M."/>
            <person name="Freitas F."/>
            <person name="Vidal M."/>
            <person name="Guedes H."/>
            <person name="Rodrigues E."/>
            <person name="Meneses C."/>
            <person name="Brioso P."/>
            <person name="Pozzer L."/>
            <person name="Figueiredo D."/>
            <person name="Montano H."/>
            <person name="Junior J."/>
            <person name="de Souza Filho G."/>
            <person name="Martin Quintana Flores V."/>
            <person name="Ferreira B."/>
            <person name="Branco A."/>
            <person name="Gonzalez P."/>
            <person name="Guillobel H."/>
            <person name="Lemos M."/>
            <person name="Seibel L."/>
            <person name="Macedo J."/>
            <person name="Alves-Ferreira M."/>
            <person name="Sachetto-Martins G."/>
            <person name="Coelho A."/>
            <person name="Santos E."/>
            <person name="Amaral G."/>
            <person name="Neves A."/>
            <person name="Pacheco A.B."/>
            <person name="Carvalho D."/>
            <person name="Lery L."/>
            <person name="Bisch P."/>
            <person name="Rossle S.C."/>
            <person name="Urmenyi T."/>
            <person name="Rael Pereira A."/>
            <person name="Silva R."/>
            <person name="Rondinelli E."/>
            <person name="von Kruger W."/>
            <person name="Martins O."/>
            <person name="Baldani J.I."/>
            <person name="Ferreira P.C."/>
        </authorList>
    </citation>
    <scope>NUCLEOTIDE SEQUENCE [LARGE SCALE GENOMIC DNA]</scope>
    <source>
        <strain>ATCC 49037 / DSM 5601 / CCUG 37298 / CIP 103539 / LMG 7603 / PAl5</strain>
    </source>
</reference>
<reference key="2">
    <citation type="journal article" date="2010" name="Stand. Genomic Sci.">
        <title>Two genome sequences of the same bacterial strain, Gluconacetobacter diazotrophicus PAl 5, suggest a new standard in genome sequence submission.</title>
        <authorList>
            <person name="Giongo A."/>
            <person name="Tyler H.L."/>
            <person name="Zipperer U.N."/>
            <person name="Triplett E.W."/>
        </authorList>
    </citation>
    <scope>NUCLEOTIDE SEQUENCE [LARGE SCALE GENOMIC DNA]</scope>
    <source>
        <strain>ATCC 49037 / DSM 5601 / CCUG 37298 / CIP 103539 / LMG 7603 / PAl5</strain>
    </source>
</reference>
<name>CYSG_GLUDA</name>
<dbReference type="EC" id="2.1.1.107" evidence="1"/>
<dbReference type="EC" id="1.3.1.76" evidence="1"/>
<dbReference type="EC" id="4.99.1.4" evidence="1"/>
<dbReference type="EMBL" id="AM889285">
    <property type="protein sequence ID" value="CAP54108.1"/>
    <property type="molecule type" value="Genomic_DNA"/>
</dbReference>
<dbReference type="EMBL" id="CP001189">
    <property type="protein sequence ID" value="ACI51990.1"/>
    <property type="molecule type" value="Genomic_DNA"/>
</dbReference>
<dbReference type="RefSeq" id="WP_012222404.1">
    <property type="nucleotide sequence ID" value="NC_010125.1"/>
</dbReference>
<dbReference type="SMR" id="A9H259"/>
<dbReference type="STRING" id="272568.GDI0165"/>
<dbReference type="KEGG" id="gdi:GDI0165"/>
<dbReference type="KEGG" id="gdj:Gdia_2235"/>
<dbReference type="eggNOG" id="COG0007">
    <property type="taxonomic scope" value="Bacteria"/>
</dbReference>
<dbReference type="eggNOG" id="COG1648">
    <property type="taxonomic scope" value="Bacteria"/>
</dbReference>
<dbReference type="HOGENOM" id="CLU_011276_2_1_5"/>
<dbReference type="OrthoDB" id="9815856at2"/>
<dbReference type="UniPathway" id="UPA00148">
    <property type="reaction ID" value="UER00211"/>
</dbReference>
<dbReference type="UniPathway" id="UPA00148">
    <property type="reaction ID" value="UER00222"/>
</dbReference>
<dbReference type="UniPathway" id="UPA00262">
    <property type="reaction ID" value="UER00211"/>
</dbReference>
<dbReference type="UniPathway" id="UPA00262">
    <property type="reaction ID" value="UER00222"/>
</dbReference>
<dbReference type="UniPathway" id="UPA00262">
    <property type="reaction ID" value="UER00376"/>
</dbReference>
<dbReference type="Proteomes" id="UP000001176">
    <property type="component" value="Chromosome"/>
</dbReference>
<dbReference type="GO" id="GO:0051287">
    <property type="term" value="F:NAD binding"/>
    <property type="evidence" value="ECO:0007669"/>
    <property type="project" value="InterPro"/>
</dbReference>
<dbReference type="GO" id="GO:0043115">
    <property type="term" value="F:precorrin-2 dehydrogenase activity"/>
    <property type="evidence" value="ECO:0007669"/>
    <property type="project" value="UniProtKB-UniRule"/>
</dbReference>
<dbReference type="GO" id="GO:0051266">
    <property type="term" value="F:sirohydrochlorin ferrochelatase activity"/>
    <property type="evidence" value="ECO:0007669"/>
    <property type="project" value="UniProtKB-EC"/>
</dbReference>
<dbReference type="GO" id="GO:0004851">
    <property type="term" value="F:uroporphyrin-III C-methyltransferase activity"/>
    <property type="evidence" value="ECO:0007669"/>
    <property type="project" value="UniProtKB-UniRule"/>
</dbReference>
<dbReference type="GO" id="GO:0009236">
    <property type="term" value="P:cobalamin biosynthetic process"/>
    <property type="evidence" value="ECO:0007669"/>
    <property type="project" value="UniProtKB-UniRule"/>
</dbReference>
<dbReference type="GO" id="GO:0032259">
    <property type="term" value="P:methylation"/>
    <property type="evidence" value="ECO:0007669"/>
    <property type="project" value="UniProtKB-KW"/>
</dbReference>
<dbReference type="GO" id="GO:0019354">
    <property type="term" value="P:siroheme biosynthetic process"/>
    <property type="evidence" value="ECO:0007669"/>
    <property type="project" value="UniProtKB-UniRule"/>
</dbReference>
<dbReference type="CDD" id="cd11642">
    <property type="entry name" value="SUMT"/>
    <property type="match status" value="1"/>
</dbReference>
<dbReference type="FunFam" id="3.30.950.10:FF:000001">
    <property type="entry name" value="Siroheme synthase"/>
    <property type="match status" value="1"/>
</dbReference>
<dbReference type="FunFam" id="3.40.1010.10:FF:000001">
    <property type="entry name" value="Siroheme synthase"/>
    <property type="match status" value="1"/>
</dbReference>
<dbReference type="Gene3D" id="3.40.1010.10">
    <property type="entry name" value="Cobalt-precorrin-4 Transmethylase, Domain 1"/>
    <property type="match status" value="1"/>
</dbReference>
<dbReference type="Gene3D" id="3.30.950.10">
    <property type="entry name" value="Methyltransferase, Cobalt-precorrin-4 Transmethylase, Domain 2"/>
    <property type="match status" value="1"/>
</dbReference>
<dbReference type="Gene3D" id="3.40.50.720">
    <property type="entry name" value="NAD(P)-binding Rossmann-like Domain"/>
    <property type="match status" value="1"/>
</dbReference>
<dbReference type="Gene3D" id="1.10.8.210">
    <property type="entry name" value="Sirohaem synthase, dimerisation domain"/>
    <property type="match status" value="1"/>
</dbReference>
<dbReference type="Gene3D" id="3.30.160.110">
    <property type="entry name" value="Siroheme synthase, domain 2"/>
    <property type="match status" value="1"/>
</dbReference>
<dbReference type="HAMAP" id="MF_01646">
    <property type="entry name" value="Siroheme_synth"/>
    <property type="match status" value="1"/>
</dbReference>
<dbReference type="InterPro" id="IPR000878">
    <property type="entry name" value="4pyrrol_Mease"/>
</dbReference>
<dbReference type="InterPro" id="IPR035996">
    <property type="entry name" value="4pyrrol_Methylase_sf"/>
</dbReference>
<dbReference type="InterPro" id="IPR014777">
    <property type="entry name" value="4pyrrole_Mease_sub1"/>
</dbReference>
<dbReference type="InterPro" id="IPR014776">
    <property type="entry name" value="4pyrrole_Mease_sub2"/>
</dbReference>
<dbReference type="InterPro" id="IPR006366">
    <property type="entry name" value="CobA/CysG_C"/>
</dbReference>
<dbReference type="InterPro" id="IPR036291">
    <property type="entry name" value="NAD(P)-bd_dom_sf"/>
</dbReference>
<dbReference type="InterPro" id="IPR050161">
    <property type="entry name" value="Siro_Cobalamin_biosynth"/>
</dbReference>
<dbReference type="InterPro" id="IPR037115">
    <property type="entry name" value="Sirohaem_synt_dimer_dom_sf"/>
</dbReference>
<dbReference type="InterPro" id="IPR012409">
    <property type="entry name" value="Sirohaem_synth"/>
</dbReference>
<dbReference type="InterPro" id="IPR028281">
    <property type="entry name" value="Sirohaem_synthase_central"/>
</dbReference>
<dbReference type="InterPro" id="IPR019478">
    <property type="entry name" value="Sirohaem_synthase_dimer_dom"/>
</dbReference>
<dbReference type="InterPro" id="IPR006367">
    <property type="entry name" value="Sirohaem_synthase_N"/>
</dbReference>
<dbReference type="InterPro" id="IPR003043">
    <property type="entry name" value="Uropor_MeTrfase_CS"/>
</dbReference>
<dbReference type="NCBIfam" id="TIGR01469">
    <property type="entry name" value="cobA_cysG_Cterm"/>
    <property type="match status" value="1"/>
</dbReference>
<dbReference type="NCBIfam" id="TIGR01470">
    <property type="entry name" value="cysG_Nterm"/>
    <property type="match status" value="1"/>
</dbReference>
<dbReference type="NCBIfam" id="NF004790">
    <property type="entry name" value="PRK06136.1"/>
    <property type="match status" value="1"/>
</dbReference>
<dbReference type="NCBIfam" id="NF007922">
    <property type="entry name" value="PRK10637.1"/>
    <property type="match status" value="1"/>
</dbReference>
<dbReference type="PANTHER" id="PTHR45790:SF1">
    <property type="entry name" value="SIROHEME SYNTHASE"/>
    <property type="match status" value="1"/>
</dbReference>
<dbReference type="PANTHER" id="PTHR45790">
    <property type="entry name" value="SIROHEME SYNTHASE-RELATED"/>
    <property type="match status" value="1"/>
</dbReference>
<dbReference type="Pfam" id="PF10414">
    <property type="entry name" value="CysG_dimeriser"/>
    <property type="match status" value="1"/>
</dbReference>
<dbReference type="Pfam" id="PF13241">
    <property type="entry name" value="NAD_binding_7"/>
    <property type="match status" value="1"/>
</dbReference>
<dbReference type="Pfam" id="PF14824">
    <property type="entry name" value="Sirohm_synth_M"/>
    <property type="match status" value="1"/>
</dbReference>
<dbReference type="Pfam" id="PF00590">
    <property type="entry name" value="TP_methylase"/>
    <property type="match status" value="1"/>
</dbReference>
<dbReference type="PIRSF" id="PIRSF036426">
    <property type="entry name" value="Sirohaem_synth"/>
    <property type="match status" value="1"/>
</dbReference>
<dbReference type="SUPFAM" id="SSF51735">
    <property type="entry name" value="NAD(P)-binding Rossmann-fold domains"/>
    <property type="match status" value="1"/>
</dbReference>
<dbReference type="SUPFAM" id="SSF75615">
    <property type="entry name" value="Siroheme synthase middle domains-like"/>
    <property type="match status" value="1"/>
</dbReference>
<dbReference type="SUPFAM" id="SSF53790">
    <property type="entry name" value="Tetrapyrrole methylase"/>
    <property type="match status" value="1"/>
</dbReference>
<dbReference type="PROSITE" id="PS00839">
    <property type="entry name" value="SUMT_1"/>
    <property type="match status" value="1"/>
</dbReference>
<dbReference type="PROSITE" id="PS00840">
    <property type="entry name" value="SUMT_2"/>
    <property type="match status" value="1"/>
</dbReference>
<sequence length="470" mass="50124">MSDATDPGWFPLALRLRGARVVVVGGGGIALNKVRLLLAHAARIDILAPRLEDTLAAWQAEGRITHIAGEATPDRVRALLPGSRLVYAATDDRAVNRAVAAQADALNIPVCAVDDPEPSSFITPAQIHRGPVRIAISTGGAAPVLARRLRERIEAVMPAGLDALARFLQAERAHVVAACPDIGRRRRVWEDFLDGPGGEAAQRGEHAAARQVLDHLLAGAQTGGEVWLVGAGPGDPDLLTLRALHLMQNADSVLYDQLLPPALMDRVRRDAERVFVGKQRDRHTMPQDDINAELIRRARAGERVLRLKGGDPFIFGRGGEEIEALMAAGIPFQVVPGITAASGCAAYAGIPLTHRDCAQSCLFVTGHARRDGTLDLPWDSMARPGQTIAIYMGVTALPDLCTMLVRHGLPPDWPAAVVERGTRPDQRVLTGTLADLPALARAHAVGSPALVLVGQVVRHRVVTPPPLSGT</sequence>
<accession>A9H259</accession>
<accession>B5ZEK0</accession>
<feature type="chain" id="PRO_0000330513" description="Siroheme synthase">
    <location>
        <begin position="1"/>
        <end position="470"/>
    </location>
</feature>
<feature type="region of interest" description="Precorrin-2 dehydrogenase /sirohydrochlorin ferrochelatase" evidence="1">
    <location>
        <begin position="1"/>
        <end position="213"/>
    </location>
</feature>
<feature type="region of interest" description="Uroporphyrinogen-III C-methyltransferase" evidence="1">
    <location>
        <begin position="224"/>
        <end position="470"/>
    </location>
</feature>
<feature type="active site" description="Proton acceptor" evidence="1">
    <location>
        <position position="256"/>
    </location>
</feature>
<feature type="active site" description="Proton donor" evidence="1">
    <location>
        <position position="278"/>
    </location>
</feature>
<feature type="binding site" evidence="1">
    <location>
        <begin position="28"/>
        <end position="29"/>
    </location>
    <ligand>
        <name>NAD(+)</name>
        <dbReference type="ChEBI" id="CHEBI:57540"/>
    </ligand>
</feature>
<feature type="binding site" evidence="1">
    <location>
        <begin position="49"/>
        <end position="50"/>
    </location>
    <ligand>
        <name>NAD(+)</name>
        <dbReference type="ChEBI" id="CHEBI:57540"/>
    </ligand>
</feature>
<feature type="binding site" evidence="1">
    <location>
        <position position="233"/>
    </location>
    <ligand>
        <name>S-adenosyl-L-methionine</name>
        <dbReference type="ChEBI" id="CHEBI:59789"/>
    </ligand>
</feature>
<feature type="binding site" evidence="1">
    <location>
        <begin position="309"/>
        <end position="311"/>
    </location>
    <ligand>
        <name>S-adenosyl-L-methionine</name>
        <dbReference type="ChEBI" id="CHEBI:59789"/>
    </ligand>
</feature>
<feature type="binding site" evidence="1">
    <location>
        <position position="314"/>
    </location>
    <ligand>
        <name>S-adenosyl-L-methionine</name>
        <dbReference type="ChEBI" id="CHEBI:59789"/>
    </ligand>
</feature>
<feature type="binding site" evidence="1">
    <location>
        <begin position="339"/>
        <end position="340"/>
    </location>
    <ligand>
        <name>S-adenosyl-L-methionine</name>
        <dbReference type="ChEBI" id="CHEBI:59789"/>
    </ligand>
</feature>
<feature type="binding site" evidence="1">
    <location>
        <position position="392"/>
    </location>
    <ligand>
        <name>S-adenosyl-L-methionine</name>
        <dbReference type="ChEBI" id="CHEBI:59789"/>
    </ligand>
</feature>
<feature type="binding site" evidence="1">
    <location>
        <position position="421"/>
    </location>
    <ligand>
        <name>S-adenosyl-L-methionine</name>
        <dbReference type="ChEBI" id="CHEBI:59789"/>
    </ligand>
</feature>
<keyword id="KW-0169">Cobalamin biosynthesis</keyword>
<keyword id="KW-0456">Lyase</keyword>
<keyword id="KW-0489">Methyltransferase</keyword>
<keyword id="KW-0511">Multifunctional enzyme</keyword>
<keyword id="KW-0520">NAD</keyword>
<keyword id="KW-0560">Oxidoreductase</keyword>
<keyword id="KW-0627">Porphyrin biosynthesis</keyword>
<keyword id="KW-1185">Reference proteome</keyword>
<keyword id="KW-0949">S-adenosyl-L-methionine</keyword>
<keyword id="KW-0808">Transferase</keyword>